<accession>Q8K4J2</accession>
<accession>A2BI82</accession>
<accession>A2BI83</accession>
<accession>Q8K4J1</accession>
<accession>Q8K4J3</accession>
<accession>Q8K4J4</accession>
<accession>Q8K4J5</accession>
<feature type="chain" id="PRO_0000107836" description="Transcription factor COE4">
    <location>
        <begin position="1"/>
        <end position="599"/>
    </location>
</feature>
<feature type="domain" description="IPT/TIG">
    <location>
        <begin position="256"/>
        <end position="339"/>
    </location>
</feature>
<feature type="zinc finger region" description="C5-type" evidence="2">
    <location>
        <begin position="152"/>
        <end position="171"/>
    </location>
</feature>
<feature type="region of interest" description="Interaction with DNA" evidence="1">
    <location>
        <begin position="64"/>
        <end position="67"/>
    </location>
</feature>
<feature type="region of interest" description="Interaction with DNA" evidence="1">
    <location>
        <begin position="198"/>
        <end position="205"/>
    </location>
</feature>
<feature type="region of interest" description="Interaction with DNA" evidence="1">
    <location>
        <begin position="237"/>
        <end position="240"/>
    </location>
</feature>
<feature type="region of interest" description="Disordered" evidence="3">
    <location>
        <begin position="449"/>
        <end position="473"/>
    </location>
</feature>
<feature type="region of interest" description="Disordered" evidence="3">
    <location>
        <begin position="556"/>
        <end position="586"/>
    </location>
</feature>
<feature type="compositionally biased region" description="Low complexity" evidence="3">
    <location>
        <begin position="464"/>
        <end position="473"/>
    </location>
</feature>
<feature type="site" description="Interaction with DNA" evidence="1">
    <location>
        <position position="164"/>
    </location>
</feature>
<feature type="site" description="Interaction with DNA" evidence="1">
    <location>
        <position position="173"/>
    </location>
</feature>
<feature type="splice variant" id="VSP_001119" description="In isoform 5." evidence="6">
    <original>ELLLKRAADVAEALYSAPRAPAPLGPLAPSHPHPA</original>
    <variation>VWRLCPPPSARGRGSDPAPAAAPAVPRSCLRRSSS</variation>
    <location>
        <begin position="392"/>
        <end position="426"/>
    </location>
</feature>
<feature type="splice variant" id="VSP_001120" description="In isoform 5." evidence="6">
    <location>
        <begin position="427"/>
        <end position="599"/>
    </location>
</feature>
<feature type="splice variant" id="VSP_001121" description="In isoform 2." evidence="6">
    <original>GSYGAPGVTGLGVPGSPSFLNGSTATSP</original>
    <variation>APRWRLPPPCPFRPPPPPPASSPSRLST</variation>
    <location>
        <begin position="481"/>
        <end position="508"/>
    </location>
</feature>
<feature type="splice variant" id="VSP_001122" description="In isoform 2." evidence="6">
    <location>
        <begin position="509"/>
        <end position="599"/>
    </location>
</feature>
<feature type="splice variant" id="VSP_001123" description="In isoform 4." evidence="6">
    <original>IMPSSPPLAAASSMSLPAAAPTTSVFSFSPV</original>
    <variation>KERLRPCAAPTQFPIAGLPQSPQRGASRPAF</variation>
    <location>
        <begin position="511"/>
        <end position="541"/>
    </location>
</feature>
<feature type="splice variant" id="VSP_001124" description="In isoform 4." evidence="6">
    <location>
        <begin position="542"/>
        <end position="599"/>
    </location>
</feature>
<feature type="splice variant" id="VSP_001125" description="In isoform 1." evidence="6">
    <original>DQPFED</original>
    <variation>AQRTGR</variation>
    <location>
        <begin position="577"/>
        <end position="582"/>
    </location>
</feature>
<feature type="splice variant" id="VSP_001126" description="In isoform 1." evidence="6">
    <location>
        <begin position="583"/>
        <end position="599"/>
    </location>
</feature>
<comment type="function">
    <text evidence="4">Transcription factor (PubMed:12139918). Positively modulates transcription, perhaps less strongly than other early B cell factor/EBF family proteins (PubMed:12139918). Binds an EBF1/Olf-1 consensus site in vitro (PubMed:12139918).</text>
</comment>
<comment type="subunit">
    <text evidence="4">Forms either a homodimer or a heterodimer with a related family member.</text>
</comment>
<comment type="subcellular location">
    <subcellularLocation>
        <location evidence="8">Nucleus</location>
    </subcellularLocation>
</comment>
<comment type="alternative products">
    <event type="alternative splicing"/>
    <isoform>
        <id>Q8K4J2-1</id>
        <name>3</name>
        <name>4-23</name>
        <sequence type="displayed"/>
    </isoform>
    <isoform>
        <id>Q8K4J2-2</id>
        <name>1</name>
        <name>4-11</name>
        <sequence type="described" ref="VSP_001125 VSP_001126"/>
    </isoform>
    <isoform>
        <id>Q8K4J2-3</id>
        <name>2</name>
        <name>4-14</name>
        <sequence type="described" ref="VSP_001121 VSP_001122"/>
    </isoform>
    <isoform>
        <id>Q8K4J2-4</id>
        <name>4</name>
        <name>4-132</name>
        <sequence type="described" ref="VSP_001123 VSP_001124"/>
    </isoform>
    <isoform>
        <id>Q8K4J2-5</id>
        <name>5</name>
        <name>4S</name>
        <sequence type="described" ref="VSP_001119 VSP_001120"/>
    </isoform>
</comment>
<comment type="tissue specificity">
    <text evidence="4 5">Expressed in the olfactory epithelium, including in both neuronal and basal cell layers (PubMed:12139918, PubMed:35939714). Absent in the vomeronasal organ (PubMed:12139918). Absent from NK cells and CD8(+) T cells (PubMed:35939714).</text>
</comment>
<comment type="disruption phenotype">
    <text evidence="5">Apparently no differences in the NK, CD8(+), and CD4(+) precursor and mature cell subsets in the thymus, spleen, or liver.</text>
</comment>
<comment type="miscellaneous">
    <molecule>Isoform 4</molecule>
    <text evidence="7">May be produced at very low levels due to a premature stop codon in the mRNA, leading to nonsense-mediated mRNA decay.</text>
</comment>
<comment type="similarity">
    <text evidence="7">Belongs to the COE family.</text>
</comment>
<comment type="caution">
    <text evidence="5">EBF4 is expressed in human NK cells and CD8(+) T-cells (PubMed:35939714). It has been suggested, therefore, that the functions of EBF4 differ between humans and mice (PubMed:35939714).</text>
</comment>
<protein>
    <recommendedName>
        <fullName>Transcription factor COE4</fullName>
    </recommendedName>
    <alternativeName>
        <fullName>Early B-cell factor 4</fullName>
        <shortName>EBF-4</shortName>
    </alternativeName>
    <alternativeName>
        <fullName>Olf-1/EBF-like 4</fullName>
        <shortName>O/E-4</shortName>
        <shortName>OE-4</shortName>
    </alternativeName>
</protein>
<reference key="1">
    <citation type="journal article" date="2002" name="Mol. Cell. Neurosci.">
        <title>Cloning of a novel Olf-1/EBF-like gene, O/E-4, by degenerate oligo-based direct selection.</title>
        <authorList>
            <person name="Wang S.S."/>
            <person name="Betz A.G."/>
            <person name="Reed R.R."/>
        </authorList>
    </citation>
    <scope>NUCLEOTIDE SEQUENCE [MRNA] (ISOFORMS 1; 2; 3; 4 AND 5)</scope>
    <scope>TISSUE SPECIFICITY</scope>
    <source>
        <strain>C57BL/6J</strain>
    </source>
</reference>
<reference key="2">
    <citation type="journal article" date="2009" name="PLoS Biol.">
        <title>Lineage-specific biology revealed by a finished genome assembly of the mouse.</title>
        <authorList>
            <person name="Church D.M."/>
            <person name="Goodstadt L."/>
            <person name="Hillier L.W."/>
            <person name="Zody M.C."/>
            <person name="Goldstein S."/>
            <person name="She X."/>
            <person name="Bult C.J."/>
            <person name="Agarwala R."/>
            <person name="Cherry J.L."/>
            <person name="DiCuccio M."/>
            <person name="Hlavina W."/>
            <person name="Kapustin Y."/>
            <person name="Meric P."/>
            <person name="Maglott D."/>
            <person name="Birtle Z."/>
            <person name="Marques A.C."/>
            <person name="Graves T."/>
            <person name="Zhou S."/>
            <person name="Teague B."/>
            <person name="Potamousis K."/>
            <person name="Churas C."/>
            <person name="Place M."/>
            <person name="Herschleb J."/>
            <person name="Runnheim R."/>
            <person name="Forrest D."/>
            <person name="Amos-Landgraf J."/>
            <person name="Schwartz D.C."/>
            <person name="Cheng Z."/>
            <person name="Lindblad-Toh K."/>
            <person name="Eichler E.E."/>
            <person name="Ponting C.P."/>
        </authorList>
    </citation>
    <scope>NUCLEOTIDE SEQUENCE [LARGE SCALE GENOMIC DNA]</scope>
    <source>
        <strain>C57BL/6J</strain>
    </source>
</reference>
<reference key="3">
    <citation type="journal article" date="2022" name="Proc. Natl. Acad. Sci. U.S.A.">
        <title>Early B cell factor 4 modulates FAS-mediated apoptosis and promotes cytotoxic function in human immune cells.</title>
        <authorList>
            <person name="Kubo S."/>
            <person name="Kataria R."/>
            <person name="Yao Y."/>
            <person name="Gabrielski J.Q."/>
            <person name="Zheng L."/>
            <person name="Markowitz T.E."/>
            <person name="Chan W."/>
            <person name="Song J."/>
            <person name="Boddapati A.K."/>
            <person name="Saeki K."/>
            <person name="Haeupl B."/>
            <person name="Park A.Y."/>
            <person name="Cheng Y.H."/>
            <person name="Cui J."/>
            <person name="Oellerich T."/>
            <person name="Lenardo M.J."/>
        </authorList>
    </citation>
    <scope>TISSUE SPECIFICITY</scope>
    <scope>DISRUPTION PHENOTYPE</scope>
</reference>
<gene>
    <name type="primary">Ebf4</name>
    <name type="synonym">Coe4</name>
</gene>
<dbReference type="EMBL" id="AF387630">
    <property type="protein sequence ID" value="AAM97580.1"/>
    <property type="molecule type" value="mRNA"/>
</dbReference>
<dbReference type="EMBL" id="AF387631">
    <property type="protein sequence ID" value="AAM97581.1"/>
    <property type="molecule type" value="mRNA"/>
</dbReference>
<dbReference type="EMBL" id="AF387632">
    <property type="protein sequence ID" value="AAM97582.1"/>
    <property type="molecule type" value="mRNA"/>
</dbReference>
<dbReference type="EMBL" id="AF387633">
    <property type="protein sequence ID" value="AAM97583.1"/>
    <property type="molecule type" value="mRNA"/>
</dbReference>
<dbReference type="EMBL" id="AF387634">
    <property type="protein sequence ID" value="AAM97584.1"/>
    <property type="molecule type" value="mRNA"/>
</dbReference>
<dbReference type="EMBL" id="BX890605">
    <property type="status" value="NOT_ANNOTATED_CDS"/>
    <property type="molecule type" value="Genomic_DNA"/>
</dbReference>
<dbReference type="EMBL" id="BX936285">
    <property type="status" value="NOT_ANNOTATED_CDS"/>
    <property type="molecule type" value="Genomic_DNA"/>
</dbReference>
<dbReference type="CCDS" id="CCDS50709.1">
    <molecule id="Q8K4J2-1"/>
</dbReference>
<dbReference type="RefSeq" id="NP_001103983.1">
    <molecule id="Q8K4J2-1"/>
    <property type="nucleotide sequence ID" value="NM_001110513.1"/>
</dbReference>
<dbReference type="RefSeq" id="XP_011237773.1">
    <property type="nucleotide sequence ID" value="XM_011239471.2"/>
</dbReference>
<dbReference type="RefSeq" id="XP_011237774.1">
    <molecule id="Q8K4J2-3"/>
    <property type="nucleotide sequence ID" value="XM_011239472.4"/>
</dbReference>
<dbReference type="SMR" id="Q8K4J2"/>
<dbReference type="BioGRID" id="230746">
    <property type="interactions" value="2"/>
</dbReference>
<dbReference type="FunCoup" id="Q8K4J2">
    <property type="interactions" value="31"/>
</dbReference>
<dbReference type="STRING" id="10090.ENSMUSP00000105915"/>
<dbReference type="iPTMnet" id="Q8K4J2"/>
<dbReference type="PhosphoSitePlus" id="Q8K4J2"/>
<dbReference type="jPOST" id="Q8K4J2"/>
<dbReference type="PaxDb" id="10090-ENSMUSP00000105915"/>
<dbReference type="ProteomicsDB" id="283479">
    <molecule id="Q8K4J2-1"/>
</dbReference>
<dbReference type="ProteomicsDB" id="283480">
    <molecule id="Q8K4J2-2"/>
</dbReference>
<dbReference type="ProteomicsDB" id="283481">
    <molecule id="Q8K4J2-3"/>
</dbReference>
<dbReference type="ProteomicsDB" id="283482">
    <molecule id="Q8K4J2-4"/>
</dbReference>
<dbReference type="ProteomicsDB" id="283483">
    <molecule id="Q8K4J2-5"/>
</dbReference>
<dbReference type="Antibodypedia" id="23277">
    <property type="antibodies" value="85 antibodies from 17 providers"/>
</dbReference>
<dbReference type="DNASU" id="228598"/>
<dbReference type="Ensembl" id="ENSMUST00000110286.8">
    <molecule id="Q8K4J2-1"/>
    <property type="protein sequence ID" value="ENSMUSP00000105915.2"/>
    <property type="gene ID" value="ENSMUSG00000053552.15"/>
</dbReference>
<dbReference type="Ensembl" id="ENSMUST00000126740.8">
    <molecule id="Q8K4J2-2"/>
    <property type="protein sequence ID" value="ENSMUSP00000133528.2"/>
    <property type="gene ID" value="ENSMUSG00000053552.15"/>
</dbReference>
<dbReference type="Ensembl" id="ENSMUST00000140169.8">
    <molecule id="Q8K4J2-4"/>
    <property type="protein sequence ID" value="ENSMUSP00000134520.2"/>
    <property type="gene ID" value="ENSMUSG00000053552.15"/>
</dbReference>
<dbReference type="GeneID" id="228598"/>
<dbReference type="KEGG" id="mmu:228598"/>
<dbReference type="UCSC" id="uc008miq.2">
    <molecule id="Q8K4J2-1"/>
    <property type="organism name" value="mouse"/>
</dbReference>
<dbReference type="AGR" id="MGI:2385972"/>
<dbReference type="CTD" id="57593"/>
<dbReference type="MGI" id="MGI:2385972">
    <property type="gene designation" value="Ebf4"/>
</dbReference>
<dbReference type="VEuPathDB" id="HostDB:ENSMUSG00000053552"/>
<dbReference type="eggNOG" id="KOG3836">
    <property type="taxonomic scope" value="Eukaryota"/>
</dbReference>
<dbReference type="GeneTree" id="ENSGT00950000182859"/>
<dbReference type="InParanoid" id="Q8K4J2"/>
<dbReference type="OMA" id="GGVCWPG"/>
<dbReference type="TreeFam" id="TF313391"/>
<dbReference type="BioGRID-ORCS" id="228598">
    <property type="hits" value="1 hit in 76 CRISPR screens"/>
</dbReference>
<dbReference type="PRO" id="PR:Q8K4J2"/>
<dbReference type="Proteomes" id="UP000000589">
    <property type="component" value="Chromosome 2"/>
</dbReference>
<dbReference type="RNAct" id="Q8K4J2">
    <property type="molecule type" value="protein"/>
</dbReference>
<dbReference type="Bgee" id="ENSMUSG00000053552">
    <property type="expression patterns" value="Expressed in olfactory epithelium and 121 other cell types or tissues"/>
</dbReference>
<dbReference type="ExpressionAtlas" id="Q8K4J2">
    <property type="expression patterns" value="baseline and differential"/>
</dbReference>
<dbReference type="GO" id="GO:0000785">
    <property type="term" value="C:chromatin"/>
    <property type="evidence" value="ECO:0007669"/>
    <property type="project" value="Ensembl"/>
</dbReference>
<dbReference type="GO" id="GO:0005634">
    <property type="term" value="C:nucleus"/>
    <property type="evidence" value="ECO:0007669"/>
    <property type="project" value="UniProtKB-SubCell"/>
</dbReference>
<dbReference type="GO" id="GO:0003677">
    <property type="term" value="F:DNA binding"/>
    <property type="evidence" value="ECO:0000314"/>
    <property type="project" value="MGI"/>
</dbReference>
<dbReference type="GO" id="GO:0001228">
    <property type="term" value="F:DNA-binding transcription activator activity, RNA polymerase II-specific"/>
    <property type="evidence" value="ECO:0000314"/>
    <property type="project" value="NTNU_SB"/>
</dbReference>
<dbReference type="GO" id="GO:0140297">
    <property type="term" value="F:DNA-binding transcription factor binding"/>
    <property type="evidence" value="ECO:0007669"/>
    <property type="project" value="Ensembl"/>
</dbReference>
<dbReference type="GO" id="GO:0000978">
    <property type="term" value="F:RNA polymerase II cis-regulatory region sequence-specific DNA binding"/>
    <property type="evidence" value="ECO:0007669"/>
    <property type="project" value="Ensembl"/>
</dbReference>
<dbReference type="GO" id="GO:0000977">
    <property type="term" value="F:RNA polymerase II transcription regulatory region sequence-specific DNA binding"/>
    <property type="evidence" value="ECO:0000315"/>
    <property type="project" value="NTNU_SB"/>
</dbReference>
<dbReference type="GO" id="GO:0008270">
    <property type="term" value="F:zinc ion binding"/>
    <property type="evidence" value="ECO:0007669"/>
    <property type="project" value="UniProtKB-KW"/>
</dbReference>
<dbReference type="GO" id="GO:0045944">
    <property type="term" value="P:positive regulation of transcription by RNA polymerase II"/>
    <property type="evidence" value="ECO:0000314"/>
    <property type="project" value="NTNU_SB"/>
</dbReference>
<dbReference type="GO" id="GO:0006355">
    <property type="term" value="P:regulation of DNA-templated transcription"/>
    <property type="evidence" value="ECO:0000314"/>
    <property type="project" value="MGI"/>
</dbReference>
<dbReference type="GO" id="GO:0070231">
    <property type="term" value="P:T cell apoptotic process"/>
    <property type="evidence" value="ECO:0007669"/>
    <property type="project" value="Ensembl"/>
</dbReference>
<dbReference type="CDD" id="cd11606">
    <property type="entry name" value="COE_DBD"/>
    <property type="match status" value="1"/>
</dbReference>
<dbReference type="CDD" id="cd01175">
    <property type="entry name" value="IPT_COE"/>
    <property type="match status" value="1"/>
</dbReference>
<dbReference type="FunFam" id="1.10.287.4280:FF:000001">
    <property type="entry name" value="transcription factor COE1 isoform X2"/>
    <property type="match status" value="1"/>
</dbReference>
<dbReference type="FunFam" id="2.60.40.10:FF:000021">
    <property type="entry name" value="transcription factor COE1 isoform X2"/>
    <property type="match status" value="1"/>
</dbReference>
<dbReference type="FunFam" id="2.60.40.3180:FF:000001">
    <property type="entry name" value="transcription factor COE1 isoform X2"/>
    <property type="match status" value="1"/>
</dbReference>
<dbReference type="Gene3D" id="1.10.287.4280">
    <property type="match status" value="1"/>
</dbReference>
<dbReference type="Gene3D" id="2.60.40.10">
    <property type="entry name" value="Immunoglobulins"/>
    <property type="match status" value="1"/>
</dbReference>
<dbReference type="Gene3D" id="2.60.40.3180">
    <property type="entry name" value="Transcription factor COE1, DNA-binding domain"/>
    <property type="match status" value="1"/>
</dbReference>
<dbReference type="InterPro" id="IPR032200">
    <property type="entry name" value="COE_DBD"/>
</dbReference>
<dbReference type="InterPro" id="IPR038173">
    <property type="entry name" value="COE_DBD_sf"/>
</dbReference>
<dbReference type="InterPro" id="IPR032201">
    <property type="entry name" value="COE_HLH"/>
</dbReference>
<dbReference type="InterPro" id="IPR038006">
    <property type="entry name" value="COE_IPT"/>
</dbReference>
<dbReference type="InterPro" id="IPR013783">
    <property type="entry name" value="Ig-like_fold"/>
</dbReference>
<dbReference type="InterPro" id="IPR014756">
    <property type="entry name" value="Ig_E-set"/>
</dbReference>
<dbReference type="InterPro" id="IPR002909">
    <property type="entry name" value="IPT_dom"/>
</dbReference>
<dbReference type="InterPro" id="IPR003523">
    <property type="entry name" value="Transcription_factor_COE"/>
</dbReference>
<dbReference type="InterPro" id="IPR018350">
    <property type="entry name" value="Transcription_factor_COE_CS"/>
</dbReference>
<dbReference type="PANTHER" id="PTHR10747">
    <property type="entry name" value="TRANSCRIPTION FACTOR COE FAMILY MEMBER"/>
    <property type="match status" value="1"/>
</dbReference>
<dbReference type="Pfam" id="PF16422">
    <property type="entry name" value="COE1_DBD"/>
    <property type="match status" value="1"/>
</dbReference>
<dbReference type="Pfam" id="PF16423">
    <property type="entry name" value="COE1_HLH"/>
    <property type="match status" value="1"/>
</dbReference>
<dbReference type="Pfam" id="PF01833">
    <property type="entry name" value="TIG"/>
    <property type="match status" value="1"/>
</dbReference>
<dbReference type="SMART" id="SM00429">
    <property type="entry name" value="IPT"/>
    <property type="match status" value="1"/>
</dbReference>
<dbReference type="SUPFAM" id="SSF81296">
    <property type="entry name" value="E set domains"/>
    <property type="match status" value="1"/>
</dbReference>
<dbReference type="PROSITE" id="PS01345">
    <property type="entry name" value="COE"/>
    <property type="match status" value="1"/>
</dbReference>
<name>COE4_MOUSE</name>
<proteinExistence type="evidence at transcript level"/>
<evidence type="ECO:0000250" key="1"/>
<evidence type="ECO:0000255" key="2"/>
<evidence type="ECO:0000256" key="3">
    <source>
        <dbReference type="SAM" id="MobiDB-lite"/>
    </source>
</evidence>
<evidence type="ECO:0000269" key="4">
    <source>
    </source>
</evidence>
<evidence type="ECO:0000269" key="5">
    <source>
    </source>
</evidence>
<evidence type="ECO:0000303" key="6">
    <source>
    </source>
</evidence>
<evidence type="ECO:0000305" key="7"/>
<evidence type="ECO:0000305" key="8">
    <source>
    </source>
</evidence>
<keyword id="KW-0010">Activator</keyword>
<keyword id="KW-0025">Alternative splicing</keyword>
<keyword id="KW-0217">Developmental protein</keyword>
<keyword id="KW-0238">DNA-binding</keyword>
<keyword id="KW-0479">Metal-binding</keyword>
<keyword id="KW-0539">Nucleus</keyword>
<keyword id="KW-1185">Reference proteome</keyword>
<keyword id="KW-0804">Transcription</keyword>
<keyword id="KW-0805">Transcription regulation</keyword>
<keyword id="KW-0862">Zinc</keyword>
<keyword id="KW-0863">Zinc-finger</keyword>
<organism>
    <name type="scientific">Mus musculus</name>
    <name type="common">Mouse</name>
    <dbReference type="NCBI Taxonomy" id="10090"/>
    <lineage>
        <taxon>Eukaryota</taxon>
        <taxon>Metazoa</taxon>
        <taxon>Chordata</taxon>
        <taxon>Craniata</taxon>
        <taxon>Vertebrata</taxon>
        <taxon>Euteleostomi</taxon>
        <taxon>Mammalia</taxon>
        <taxon>Eutheria</taxon>
        <taxon>Euarchontoglires</taxon>
        <taxon>Glires</taxon>
        <taxon>Rodentia</taxon>
        <taxon>Myomorpha</taxon>
        <taxon>Muroidea</taxon>
        <taxon>Muridae</taxon>
        <taxon>Murinae</taxon>
        <taxon>Mus</taxon>
        <taxon>Mus</taxon>
    </lineage>
</organism>
<sequence>MFPAQDALPRGGLHLKEEPLLPSSLGSVRSWMQSAGILDSNTAAQSGVGLARAHFEKQPPSNLRKSNFFHFVLAMYDRQGQPVEVERTAFIDFVEKDREPGTEKTNNGIHYRLRLVYNNGLRTEQDLYVRLIDSMSKQAIIYEGQDKNPEMCRVLLTHEIMCSRCCDRKSCGNRNETPSDPVIIDRFFLKFFLKCNQNCLKNAGNPRDMRRFQVVVSTTVSVDGHVLAVSDNMFVHNNSKHGRRARRLDPSEAATPCIKAISPGEGWTTGGATVIIIGDNFFDGLQVVFGNVLLWSELITPHAIRVQTPPRHIPGVVEVTLSYKSKQFCKGAPGRFVYTALNEPTIDYGFQRLQKVIPRHPGDPERLPKEVLLKRAADLAEALYGVPSSNQELLLKRAADVAEALYSAPRAPAPLGPLAPSHPHPAVVGINAFSSPLAIAVGDTTPEPGYARSCGSASPRFAPSPGSQQSSYGSGLGAGLGSYGAPGVTGLGVPGSPSFLNGSTATSPFAIMPSSPPLAAASSMSLPAAAPTTSVFSFSPVNMICAVKQRSAFAPVLRPPSSPSQACPRAHREGLPDQPFEDTDKFHSAARGLQGLAYS</sequence>